<protein>
    <recommendedName>
        <fullName evidence="1">Large ribosomal subunit protein uL29</fullName>
    </recommendedName>
    <alternativeName>
        <fullName evidence="3">50S ribosomal protein L29</fullName>
    </alternativeName>
</protein>
<reference key="1">
    <citation type="journal article" date="2004" name="Science">
        <title>Illuminating the evolutionary history of chlamydiae.</title>
        <authorList>
            <person name="Horn M."/>
            <person name="Collingro A."/>
            <person name="Schmitz-Esser S."/>
            <person name="Beier C.L."/>
            <person name="Purkhold U."/>
            <person name="Fartmann B."/>
            <person name="Brandt P."/>
            <person name="Nyakatura G.J."/>
            <person name="Droege M."/>
            <person name="Frishman D."/>
            <person name="Rattei T."/>
            <person name="Mewes H.-W."/>
            <person name="Wagner M."/>
        </authorList>
    </citation>
    <scope>NUCLEOTIDE SEQUENCE [LARGE SCALE GENOMIC DNA]</scope>
    <source>
        <strain>UWE25</strain>
    </source>
</reference>
<organism>
    <name type="scientific">Protochlamydia amoebophila (strain UWE25)</name>
    <dbReference type="NCBI Taxonomy" id="264201"/>
    <lineage>
        <taxon>Bacteria</taxon>
        <taxon>Pseudomonadati</taxon>
        <taxon>Chlamydiota</taxon>
        <taxon>Chlamydiia</taxon>
        <taxon>Parachlamydiales</taxon>
        <taxon>Parachlamydiaceae</taxon>
        <taxon>Candidatus Protochlamydia</taxon>
    </lineage>
</organism>
<gene>
    <name evidence="1" type="primary">rpmC</name>
    <name type="ordered locus">pc0420</name>
</gene>
<feature type="chain" id="PRO_0000130430" description="Large ribosomal subunit protein uL29">
    <location>
        <begin position="1"/>
        <end position="73"/>
    </location>
</feature>
<feature type="region of interest" description="Disordered" evidence="2">
    <location>
        <begin position="1"/>
        <end position="20"/>
    </location>
</feature>
<name>RL29_PARUW</name>
<comment type="similarity">
    <text evidence="1">Belongs to the universal ribosomal protein uL29 family.</text>
</comment>
<sequence>MYKAKDLRDQSLEELEATHDESRRKLFELNNEFRSQKKREKPHEMKHTRKDIARLLTVITEKRRENQNQTNQG</sequence>
<proteinExistence type="inferred from homology"/>
<dbReference type="EMBL" id="BX908798">
    <property type="protein sequence ID" value="CAF23144.1"/>
    <property type="molecule type" value="Genomic_DNA"/>
</dbReference>
<dbReference type="RefSeq" id="WP_011174970.1">
    <property type="nucleotide sequence ID" value="NC_005861.2"/>
</dbReference>
<dbReference type="SMR" id="Q6ME55"/>
<dbReference type="STRING" id="264201.pc0420"/>
<dbReference type="KEGG" id="pcu:PC_RS02050"/>
<dbReference type="eggNOG" id="COG0255">
    <property type="taxonomic scope" value="Bacteria"/>
</dbReference>
<dbReference type="HOGENOM" id="CLU_158491_6_0_0"/>
<dbReference type="OrthoDB" id="21612at2"/>
<dbReference type="Proteomes" id="UP000000529">
    <property type="component" value="Chromosome"/>
</dbReference>
<dbReference type="GO" id="GO:1990904">
    <property type="term" value="C:ribonucleoprotein complex"/>
    <property type="evidence" value="ECO:0007669"/>
    <property type="project" value="UniProtKB-KW"/>
</dbReference>
<dbReference type="GO" id="GO:0005840">
    <property type="term" value="C:ribosome"/>
    <property type="evidence" value="ECO:0007669"/>
    <property type="project" value="UniProtKB-KW"/>
</dbReference>
<dbReference type="GO" id="GO:0003735">
    <property type="term" value="F:structural constituent of ribosome"/>
    <property type="evidence" value="ECO:0007669"/>
    <property type="project" value="InterPro"/>
</dbReference>
<dbReference type="GO" id="GO:0006412">
    <property type="term" value="P:translation"/>
    <property type="evidence" value="ECO:0007669"/>
    <property type="project" value="UniProtKB-UniRule"/>
</dbReference>
<dbReference type="CDD" id="cd00427">
    <property type="entry name" value="Ribosomal_L29_HIP"/>
    <property type="match status" value="1"/>
</dbReference>
<dbReference type="Gene3D" id="1.10.287.310">
    <property type="match status" value="1"/>
</dbReference>
<dbReference type="HAMAP" id="MF_00374">
    <property type="entry name" value="Ribosomal_uL29"/>
    <property type="match status" value="1"/>
</dbReference>
<dbReference type="InterPro" id="IPR001854">
    <property type="entry name" value="Ribosomal_uL29"/>
</dbReference>
<dbReference type="InterPro" id="IPR018254">
    <property type="entry name" value="Ribosomal_uL29_CS"/>
</dbReference>
<dbReference type="InterPro" id="IPR036049">
    <property type="entry name" value="Ribosomal_uL29_sf"/>
</dbReference>
<dbReference type="NCBIfam" id="TIGR00012">
    <property type="entry name" value="L29"/>
    <property type="match status" value="1"/>
</dbReference>
<dbReference type="Pfam" id="PF00831">
    <property type="entry name" value="Ribosomal_L29"/>
    <property type="match status" value="1"/>
</dbReference>
<dbReference type="SUPFAM" id="SSF46561">
    <property type="entry name" value="Ribosomal protein L29 (L29p)"/>
    <property type="match status" value="1"/>
</dbReference>
<dbReference type="PROSITE" id="PS00579">
    <property type="entry name" value="RIBOSOMAL_L29"/>
    <property type="match status" value="1"/>
</dbReference>
<evidence type="ECO:0000255" key="1">
    <source>
        <dbReference type="HAMAP-Rule" id="MF_00374"/>
    </source>
</evidence>
<evidence type="ECO:0000256" key="2">
    <source>
        <dbReference type="SAM" id="MobiDB-lite"/>
    </source>
</evidence>
<evidence type="ECO:0000305" key="3"/>
<keyword id="KW-1185">Reference proteome</keyword>
<keyword id="KW-0687">Ribonucleoprotein</keyword>
<keyword id="KW-0689">Ribosomal protein</keyword>
<accession>Q6ME55</accession>